<organism>
    <name type="scientific">Shewanella sp. (strain ANA-3)</name>
    <dbReference type="NCBI Taxonomy" id="94122"/>
    <lineage>
        <taxon>Bacteria</taxon>
        <taxon>Pseudomonadati</taxon>
        <taxon>Pseudomonadota</taxon>
        <taxon>Gammaproteobacteria</taxon>
        <taxon>Alteromonadales</taxon>
        <taxon>Shewanellaceae</taxon>
        <taxon>Shewanella</taxon>
    </lineage>
</organism>
<proteinExistence type="inferred from homology"/>
<reference key="1">
    <citation type="submission" date="2006-09" db="EMBL/GenBank/DDBJ databases">
        <title>Complete sequence of chromosome 1 of Shewanella sp. ANA-3.</title>
        <authorList>
            <person name="Copeland A."/>
            <person name="Lucas S."/>
            <person name="Lapidus A."/>
            <person name="Barry K."/>
            <person name="Detter J.C."/>
            <person name="Glavina del Rio T."/>
            <person name="Hammon N."/>
            <person name="Israni S."/>
            <person name="Dalin E."/>
            <person name="Tice H."/>
            <person name="Pitluck S."/>
            <person name="Chertkov O."/>
            <person name="Brettin T."/>
            <person name="Bruce D."/>
            <person name="Han C."/>
            <person name="Tapia R."/>
            <person name="Gilna P."/>
            <person name="Schmutz J."/>
            <person name="Larimer F."/>
            <person name="Land M."/>
            <person name="Hauser L."/>
            <person name="Kyrpides N."/>
            <person name="Kim E."/>
            <person name="Newman D."/>
            <person name="Salticov C."/>
            <person name="Konstantinidis K."/>
            <person name="Klappenback J."/>
            <person name="Tiedje J."/>
            <person name="Richardson P."/>
        </authorList>
    </citation>
    <scope>NUCLEOTIDE SEQUENCE [LARGE SCALE GENOMIC DNA]</scope>
    <source>
        <strain>ANA-3</strain>
    </source>
</reference>
<dbReference type="EC" id="1.17.1.8" evidence="1"/>
<dbReference type="EMBL" id="CP000469">
    <property type="protein sequence ID" value="ABK47201.1"/>
    <property type="molecule type" value="Genomic_DNA"/>
</dbReference>
<dbReference type="RefSeq" id="WP_011716092.1">
    <property type="nucleotide sequence ID" value="NC_008577.1"/>
</dbReference>
<dbReference type="SMR" id="A0KTT2"/>
<dbReference type="STRING" id="94122.Shewana3_0966"/>
<dbReference type="GeneID" id="94726947"/>
<dbReference type="KEGG" id="shn:Shewana3_0966"/>
<dbReference type="eggNOG" id="COG0289">
    <property type="taxonomic scope" value="Bacteria"/>
</dbReference>
<dbReference type="HOGENOM" id="CLU_047479_2_1_6"/>
<dbReference type="OrthoDB" id="9790352at2"/>
<dbReference type="UniPathway" id="UPA00034">
    <property type="reaction ID" value="UER00018"/>
</dbReference>
<dbReference type="Proteomes" id="UP000002589">
    <property type="component" value="Chromosome"/>
</dbReference>
<dbReference type="GO" id="GO:0005829">
    <property type="term" value="C:cytosol"/>
    <property type="evidence" value="ECO:0007669"/>
    <property type="project" value="TreeGrafter"/>
</dbReference>
<dbReference type="GO" id="GO:0008839">
    <property type="term" value="F:4-hydroxy-tetrahydrodipicolinate reductase"/>
    <property type="evidence" value="ECO:0007669"/>
    <property type="project" value="UniProtKB-EC"/>
</dbReference>
<dbReference type="GO" id="GO:0051287">
    <property type="term" value="F:NAD binding"/>
    <property type="evidence" value="ECO:0007669"/>
    <property type="project" value="UniProtKB-UniRule"/>
</dbReference>
<dbReference type="GO" id="GO:0050661">
    <property type="term" value="F:NADP binding"/>
    <property type="evidence" value="ECO:0007669"/>
    <property type="project" value="UniProtKB-UniRule"/>
</dbReference>
<dbReference type="GO" id="GO:0016726">
    <property type="term" value="F:oxidoreductase activity, acting on CH or CH2 groups, NAD or NADP as acceptor"/>
    <property type="evidence" value="ECO:0007669"/>
    <property type="project" value="UniProtKB-UniRule"/>
</dbReference>
<dbReference type="GO" id="GO:0019877">
    <property type="term" value="P:diaminopimelate biosynthetic process"/>
    <property type="evidence" value="ECO:0007669"/>
    <property type="project" value="UniProtKB-UniRule"/>
</dbReference>
<dbReference type="GO" id="GO:0009089">
    <property type="term" value="P:lysine biosynthetic process via diaminopimelate"/>
    <property type="evidence" value="ECO:0007669"/>
    <property type="project" value="UniProtKB-UniRule"/>
</dbReference>
<dbReference type="CDD" id="cd02274">
    <property type="entry name" value="DHDPR_N"/>
    <property type="match status" value="1"/>
</dbReference>
<dbReference type="FunFam" id="3.30.360.10:FF:000004">
    <property type="entry name" value="4-hydroxy-tetrahydrodipicolinate reductase"/>
    <property type="match status" value="1"/>
</dbReference>
<dbReference type="FunFam" id="3.40.50.720:FF:000048">
    <property type="entry name" value="4-hydroxy-tetrahydrodipicolinate reductase"/>
    <property type="match status" value="1"/>
</dbReference>
<dbReference type="Gene3D" id="3.30.360.10">
    <property type="entry name" value="Dihydrodipicolinate Reductase, domain 2"/>
    <property type="match status" value="1"/>
</dbReference>
<dbReference type="Gene3D" id="3.40.50.720">
    <property type="entry name" value="NAD(P)-binding Rossmann-like Domain"/>
    <property type="match status" value="1"/>
</dbReference>
<dbReference type="HAMAP" id="MF_00102">
    <property type="entry name" value="DapB"/>
    <property type="match status" value="1"/>
</dbReference>
<dbReference type="InterPro" id="IPR022663">
    <property type="entry name" value="DapB_C"/>
</dbReference>
<dbReference type="InterPro" id="IPR000846">
    <property type="entry name" value="DapB_N"/>
</dbReference>
<dbReference type="InterPro" id="IPR022664">
    <property type="entry name" value="DapB_N_CS"/>
</dbReference>
<dbReference type="InterPro" id="IPR023940">
    <property type="entry name" value="DHDPR_bac"/>
</dbReference>
<dbReference type="InterPro" id="IPR036291">
    <property type="entry name" value="NAD(P)-bd_dom_sf"/>
</dbReference>
<dbReference type="NCBIfam" id="TIGR00036">
    <property type="entry name" value="dapB"/>
    <property type="match status" value="1"/>
</dbReference>
<dbReference type="PANTHER" id="PTHR20836:SF0">
    <property type="entry name" value="4-HYDROXY-TETRAHYDRODIPICOLINATE REDUCTASE 1, CHLOROPLASTIC-RELATED"/>
    <property type="match status" value="1"/>
</dbReference>
<dbReference type="PANTHER" id="PTHR20836">
    <property type="entry name" value="DIHYDRODIPICOLINATE REDUCTASE"/>
    <property type="match status" value="1"/>
</dbReference>
<dbReference type="Pfam" id="PF05173">
    <property type="entry name" value="DapB_C"/>
    <property type="match status" value="1"/>
</dbReference>
<dbReference type="Pfam" id="PF01113">
    <property type="entry name" value="DapB_N"/>
    <property type="match status" value="1"/>
</dbReference>
<dbReference type="PIRSF" id="PIRSF000161">
    <property type="entry name" value="DHPR"/>
    <property type="match status" value="1"/>
</dbReference>
<dbReference type="SUPFAM" id="SSF55347">
    <property type="entry name" value="Glyceraldehyde-3-phosphate dehydrogenase-like, C-terminal domain"/>
    <property type="match status" value="1"/>
</dbReference>
<dbReference type="SUPFAM" id="SSF51735">
    <property type="entry name" value="NAD(P)-binding Rossmann-fold domains"/>
    <property type="match status" value="1"/>
</dbReference>
<dbReference type="PROSITE" id="PS01298">
    <property type="entry name" value="DAPB"/>
    <property type="match status" value="1"/>
</dbReference>
<comment type="function">
    <text evidence="1">Catalyzes the conversion of 4-hydroxy-tetrahydrodipicolinate (HTPA) to tetrahydrodipicolinate.</text>
</comment>
<comment type="catalytic activity">
    <reaction evidence="1">
        <text>(S)-2,3,4,5-tetrahydrodipicolinate + NAD(+) + H2O = (2S,4S)-4-hydroxy-2,3,4,5-tetrahydrodipicolinate + NADH + H(+)</text>
        <dbReference type="Rhea" id="RHEA:35323"/>
        <dbReference type="ChEBI" id="CHEBI:15377"/>
        <dbReference type="ChEBI" id="CHEBI:15378"/>
        <dbReference type="ChEBI" id="CHEBI:16845"/>
        <dbReference type="ChEBI" id="CHEBI:57540"/>
        <dbReference type="ChEBI" id="CHEBI:57945"/>
        <dbReference type="ChEBI" id="CHEBI:67139"/>
        <dbReference type="EC" id="1.17.1.8"/>
    </reaction>
</comment>
<comment type="catalytic activity">
    <reaction evidence="1">
        <text>(S)-2,3,4,5-tetrahydrodipicolinate + NADP(+) + H2O = (2S,4S)-4-hydroxy-2,3,4,5-tetrahydrodipicolinate + NADPH + H(+)</text>
        <dbReference type="Rhea" id="RHEA:35331"/>
        <dbReference type="ChEBI" id="CHEBI:15377"/>
        <dbReference type="ChEBI" id="CHEBI:15378"/>
        <dbReference type="ChEBI" id="CHEBI:16845"/>
        <dbReference type="ChEBI" id="CHEBI:57783"/>
        <dbReference type="ChEBI" id="CHEBI:58349"/>
        <dbReference type="ChEBI" id="CHEBI:67139"/>
        <dbReference type="EC" id="1.17.1.8"/>
    </reaction>
</comment>
<comment type="pathway">
    <text evidence="1">Amino-acid biosynthesis; L-lysine biosynthesis via DAP pathway; (S)-tetrahydrodipicolinate from L-aspartate: step 4/4.</text>
</comment>
<comment type="subcellular location">
    <subcellularLocation>
        <location evidence="1">Cytoplasm</location>
    </subcellularLocation>
</comment>
<comment type="similarity">
    <text evidence="1">Belongs to the DapB family.</text>
</comment>
<comment type="caution">
    <text evidence="2">Was originally thought to be a dihydrodipicolinate reductase (DHDPR), catalyzing the conversion of dihydrodipicolinate to tetrahydrodipicolinate. However, it was shown in E.coli that the substrate of the enzymatic reaction is not dihydrodipicolinate (DHDP) but in fact (2S,4S)-4-hydroxy-2,3,4,5-tetrahydrodipicolinic acid (HTPA), the product released by the DapA-catalyzed reaction.</text>
</comment>
<accession>A0KTT2</accession>
<sequence length="270" mass="29347">MGGQVRVAIVGAGGRMGRTLIESAYHQEHIRLGAAIERPGSSLVGVDAGELVGVGKLNVIIMDSLDYATDDFDVLIDFTAPEASIVHLDWCVRHKKAMVIGTTGFNHAQKEQINAFAEQTPVVMAPNMSVGVNLMWKLLELAAEVMGDYTDIEIIEGHHRYKKDAPSGTALKMGEVIAKTLGRDLEKCAVYGREGITGERDRETIGFATVRAGDLVGEHTAMFADIGERLEITHKASSRMTFANGAMRAAHWLVEQKPGLYDMQQVLGLN</sequence>
<protein>
    <recommendedName>
        <fullName evidence="1">4-hydroxy-tetrahydrodipicolinate reductase</fullName>
        <shortName evidence="1">HTPA reductase</shortName>
        <ecNumber evidence="1">1.17.1.8</ecNumber>
    </recommendedName>
</protein>
<feature type="chain" id="PRO_1000008638" description="4-hydroxy-tetrahydrodipicolinate reductase">
    <location>
        <begin position="1"/>
        <end position="270"/>
    </location>
</feature>
<feature type="active site" description="Proton donor/acceptor" evidence="1">
    <location>
        <position position="158"/>
    </location>
</feature>
<feature type="active site" description="Proton donor" evidence="1">
    <location>
        <position position="162"/>
    </location>
</feature>
<feature type="binding site" evidence="1">
    <location>
        <begin position="11"/>
        <end position="16"/>
    </location>
    <ligand>
        <name>NAD(+)</name>
        <dbReference type="ChEBI" id="CHEBI:57540"/>
    </ligand>
</feature>
<feature type="binding site" evidence="1">
    <location>
        <position position="37"/>
    </location>
    <ligand>
        <name>NAD(+)</name>
        <dbReference type="ChEBI" id="CHEBI:57540"/>
    </ligand>
</feature>
<feature type="binding site" evidence="1">
    <location>
        <position position="38"/>
    </location>
    <ligand>
        <name>NADP(+)</name>
        <dbReference type="ChEBI" id="CHEBI:58349"/>
    </ligand>
</feature>
<feature type="binding site" evidence="1">
    <location>
        <begin position="101"/>
        <end position="103"/>
    </location>
    <ligand>
        <name>NAD(+)</name>
        <dbReference type="ChEBI" id="CHEBI:57540"/>
    </ligand>
</feature>
<feature type="binding site" evidence="1">
    <location>
        <begin position="125"/>
        <end position="128"/>
    </location>
    <ligand>
        <name>NAD(+)</name>
        <dbReference type="ChEBI" id="CHEBI:57540"/>
    </ligand>
</feature>
<feature type="binding site" evidence="1">
    <location>
        <position position="159"/>
    </location>
    <ligand>
        <name>(S)-2,3,4,5-tetrahydrodipicolinate</name>
        <dbReference type="ChEBI" id="CHEBI:16845"/>
    </ligand>
</feature>
<feature type="binding site" evidence="1">
    <location>
        <begin position="168"/>
        <end position="169"/>
    </location>
    <ligand>
        <name>(S)-2,3,4,5-tetrahydrodipicolinate</name>
        <dbReference type="ChEBI" id="CHEBI:16845"/>
    </ligand>
</feature>
<name>DAPB_SHESA</name>
<evidence type="ECO:0000255" key="1">
    <source>
        <dbReference type="HAMAP-Rule" id="MF_00102"/>
    </source>
</evidence>
<evidence type="ECO:0000305" key="2"/>
<keyword id="KW-0028">Amino-acid biosynthesis</keyword>
<keyword id="KW-0963">Cytoplasm</keyword>
<keyword id="KW-0220">Diaminopimelate biosynthesis</keyword>
<keyword id="KW-0457">Lysine biosynthesis</keyword>
<keyword id="KW-0520">NAD</keyword>
<keyword id="KW-0521">NADP</keyword>
<keyword id="KW-0560">Oxidoreductase</keyword>
<gene>
    <name evidence="1" type="primary">dapB</name>
    <name type="ordered locus">Shewana3_0966</name>
</gene>